<feature type="chain" id="PRO_0000377178" description="tRNA dimethylallyltransferase">
    <location>
        <begin position="1"/>
        <end position="314"/>
    </location>
</feature>
<feature type="region of interest" description="Interaction with substrate tRNA" evidence="1">
    <location>
        <begin position="36"/>
        <end position="39"/>
    </location>
</feature>
<feature type="region of interest" description="Interaction with substrate tRNA" evidence="1">
    <location>
        <begin position="160"/>
        <end position="164"/>
    </location>
</feature>
<feature type="region of interest" description="Interaction with substrate tRNA" evidence="1">
    <location>
        <begin position="241"/>
        <end position="246"/>
    </location>
</feature>
<feature type="region of interest" description="Interaction with substrate tRNA" evidence="1">
    <location>
        <begin position="274"/>
        <end position="281"/>
    </location>
</feature>
<feature type="binding site" evidence="1">
    <location>
        <begin position="11"/>
        <end position="18"/>
    </location>
    <ligand>
        <name>ATP</name>
        <dbReference type="ChEBI" id="CHEBI:30616"/>
    </ligand>
</feature>
<feature type="binding site" evidence="1">
    <location>
        <begin position="13"/>
        <end position="18"/>
    </location>
    <ligand>
        <name>substrate</name>
    </ligand>
</feature>
<feature type="site" description="Interaction with substrate tRNA" evidence="1">
    <location>
        <position position="102"/>
    </location>
</feature>
<feature type="site" description="Interaction with substrate tRNA" evidence="1">
    <location>
        <position position="124"/>
    </location>
</feature>
<gene>
    <name evidence="1" type="primary">miaA</name>
    <name type="ordered locus">HAPS_1211</name>
</gene>
<organism>
    <name type="scientific">Glaesserella parasuis serovar 5 (strain SH0165)</name>
    <name type="common">Haemophilus parasuis</name>
    <dbReference type="NCBI Taxonomy" id="557723"/>
    <lineage>
        <taxon>Bacteria</taxon>
        <taxon>Pseudomonadati</taxon>
        <taxon>Pseudomonadota</taxon>
        <taxon>Gammaproteobacteria</taxon>
        <taxon>Pasteurellales</taxon>
        <taxon>Pasteurellaceae</taxon>
        <taxon>Glaesserella</taxon>
    </lineage>
</organism>
<reference key="1">
    <citation type="journal article" date="2009" name="J. Bacteriol.">
        <title>Complete genome sequence of Haemophilus parasuis SH0165.</title>
        <authorList>
            <person name="Yue M."/>
            <person name="Yang F."/>
            <person name="Yang J."/>
            <person name="Bei W."/>
            <person name="Cai X."/>
            <person name="Chen L."/>
            <person name="Dong J."/>
            <person name="Zhou R."/>
            <person name="Jin M."/>
            <person name="Jin Q."/>
            <person name="Chen H."/>
        </authorList>
    </citation>
    <scope>NUCLEOTIDE SEQUENCE [LARGE SCALE GENOMIC DNA]</scope>
    <source>
        <strain>SH0165</strain>
    </source>
</reference>
<sequence length="314" mass="35765">MQKPLAIFLMGPTASGKTDLAIALRQQIPVEVISVDSALIYKGMDIGTAKPSKAELELTPHRLIDILDPSESYSVMNFREDALREMADITAQGKIPLLVGGTMLYYKALLDGLSPLPSADPDIRAEIEAKAEQIGWAGLHQELVNIDPISAKRINPNDSQRINRALEVFYISGKTMTELTAQQGEAIPYEIMQFAIVPQERAVLHQRIEQRFHKMINLGFEQEVRRLYQRGDLNVDLPSIRCVGYRQMWEYLEGQTSLDEAIFKGICATRQLAKRQITWLRGWTSEIEWLDSLDPENSYKKMIEKVQQKHLKLW</sequence>
<name>MIAA_GLAP5</name>
<keyword id="KW-0067">ATP-binding</keyword>
<keyword id="KW-0460">Magnesium</keyword>
<keyword id="KW-0547">Nucleotide-binding</keyword>
<keyword id="KW-1185">Reference proteome</keyword>
<keyword id="KW-0808">Transferase</keyword>
<keyword id="KW-0819">tRNA processing</keyword>
<comment type="function">
    <text evidence="1">Catalyzes the transfer of a dimethylallyl group onto the adenine at position 37 in tRNAs that read codons beginning with uridine, leading to the formation of N6-(dimethylallyl)adenosine (i(6)A).</text>
</comment>
<comment type="catalytic activity">
    <reaction evidence="1">
        <text>adenosine(37) in tRNA + dimethylallyl diphosphate = N(6)-dimethylallyladenosine(37) in tRNA + diphosphate</text>
        <dbReference type="Rhea" id="RHEA:26482"/>
        <dbReference type="Rhea" id="RHEA-COMP:10162"/>
        <dbReference type="Rhea" id="RHEA-COMP:10375"/>
        <dbReference type="ChEBI" id="CHEBI:33019"/>
        <dbReference type="ChEBI" id="CHEBI:57623"/>
        <dbReference type="ChEBI" id="CHEBI:74411"/>
        <dbReference type="ChEBI" id="CHEBI:74415"/>
        <dbReference type="EC" id="2.5.1.75"/>
    </reaction>
</comment>
<comment type="cofactor">
    <cofactor evidence="1">
        <name>Mg(2+)</name>
        <dbReference type="ChEBI" id="CHEBI:18420"/>
    </cofactor>
</comment>
<comment type="subunit">
    <text evidence="1">Monomer.</text>
</comment>
<comment type="similarity">
    <text evidence="1">Belongs to the IPP transferase family.</text>
</comment>
<evidence type="ECO:0000255" key="1">
    <source>
        <dbReference type="HAMAP-Rule" id="MF_00185"/>
    </source>
</evidence>
<dbReference type="EC" id="2.5.1.75" evidence="1"/>
<dbReference type="EMBL" id="CP001321">
    <property type="protein sequence ID" value="ACL32814.1"/>
    <property type="molecule type" value="Genomic_DNA"/>
</dbReference>
<dbReference type="RefSeq" id="WP_015939676.1">
    <property type="nucleotide sequence ID" value="NC_011852.1"/>
</dbReference>
<dbReference type="SMR" id="B8F662"/>
<dbReference type="STRING" id="557723.HAPS_1211"/>
<dbReference type="KEGG" id="hap:HAPS_1211"/>
<dbReference type="HOGENOM" id="CLU_032616_0_0_6"/>
<dbReference type="Proteomes" id="UP000006743">
    <property type="component" value="Chromosome"/>
</dbReference>
<dbReference type="GO" id="GO:0005524">
    <property type="term" value="F:ATP binding"/>
    <property type="evidence" value="ECO:0007669"/>
    <property type="project" value="UniProtKB-UniRule"/>
</dbReference>
<dbReference type="GO" id="GO:0052381">
    <property type="term" value="F:tRNA dimethylallyltransferase activity"/>
    <property type="evidence" value="ECO:0007669"/>
    <property type="project" value="UniProtKB-UniRule"/>
</dbReference>
<dbReference type="GO" id="GO:0006400">
    <property type="term" value="P:tRNA modification"/>
    <property type="evidence" value="ECO:0007669"/>
    <property type="project" value="TreeGrafter"/>
</dbReference>
<dbReference type="FunFam" id="1.10.20.140:FF:000001">
    <property type="entry name" value="tRNA dimethylallyltransferase"/>
    <property type="match status" value="1"/>
</dbReference>
<dbReference type="Gene3D" id="1.10.20.140">
    <property type="match status" value="1"/>
</dbReference>
<dbReference type="Gene3D" id="3.40.50.300">
    <property type="entry name" value="P-loop containing nucleotide triphosphate hydrolases"/>
    <property type="match status" value="1"/>
</dbReference>
<dbReference type="HAMAP" id="MF_00185">
    <property type="entry name" value="IPP_trans"/>
    <property type="match status" value="1"/>
</dbReference>
<dbReference type="InterPro" id="IPR039657">
    <property type="entry name" value="Dimethylallyltransferase"/>
</dbReference>
<dbReference type="InterPro" id="IPR018022">
    <property type="entry name" value="IPT"/>
</dbReference>
<dbReference type="InterPro" id="IPR027417">
    <property type="entry name" value="P-loop_NTPase"/>
</dbReference>
<dbReference type="NCBIfam" id="TIGR00174">
    <property type="entry name" value="miaA"/>
    <property type="match status" value="1"/>
</dbReference>
<dbReference type="PANTHER" id="PTHR11088">
    <property type="entry name" value="TRNA DIMETHYLALLYLTRANSFERASE"/>
    <property type="match status" value="1"/>
</dbReference>
<dbReference type="PANTHER" id="PTHR11088:SF60">
    <property type="entry name" value="TRNA DIMETHYLALLYLTRANSFERASE"/>
    <property type="match status" value="1"/>
</dbReference>
<dbReference type="Pfam" id="PF01715">
    <property type="entry name" value="IPPT"/>
    <property type="match status" value="1"/>
</dbReference>
<dbReference type="SUPFAM" id="SSF52540">
    <property type="entry name" value="P-loop containing nucleoside triphosphate hydrolases"/>
    <property type="match status" value="1"/>
</dbReference>
<proteinExistence type="inferred from homology"/>
<accession>B8F662</accession>
<protein>
    <recommendedName>
        <fullName evidence="1">tRNA dimethylallyltransferase</fullName>
        <ecNumber evidence="1">2.5.1.75</ecNumber>
    </recommendedName>
    <alternativeName>
        <fullName evidence="1">Dimethylallyl diphosphate:tRNA dimethylallyltransferase</fullName>
        <shortName evidence="1">DMAPP:tRNA dimethylallyltransferase</shortName>
        <shortName evidence="1">DMATase</shortName>
    </alternativeName>
    <alternativeName>
        <fullName evidence="1">Isopentenyl-diphosphate:tRNA isopentenyltransferase</fullName>
        <shortName evidence="1">IPP transferase</shortName>
        <shortName evidence="1">IPPT</shortName>
        <shortName evidence="1">IPTase</shortName>
    </alternativeName>
</protein>